<reference key="1">
    <citation type="journal article" date="2005" name="Science">
        <title>Extensive DNA inversions in the B. fragilis genome control variable gene expression.</title>
        <authorList>
            <person name="Cerdeno-Tarraga A.-M."/>
            <person name="Patrick S."/>
            <person name="Crossman L.C."/>
            <person name="Blakely G."/>
            <person name="Abratt V."/>
            <person name="Lennard N."/>
            <person name="Poxton I."/>
            <person name="Duerden B."/>
            <person name="Harris B."/>
            <person name="Quail M.A."/>
            <person name="Barron A."/>
            <person name="Clark L."/>
            <person name="Corton C."/>
            <person name="Doggett J."/>
            <person name="Holden M.T.G."/>
            <person name="Larke N."/>
            <person name="Line A."/>
            <person name="Lord A."/>
            <person name="Norbertczak H."/>
            <person name="Ormond D."/>
            <person name="Price C."/>
            <person name="Rabbinowitsch E."/>
            <person name="Woodward J."/>
            <person name="Barrell B.G."/>
            <person name="Parkhill J."/>
        </authorList>
    </citation>
    <scope>NUCLEOTIDE SEQUENCE [LARGE SCALE GENOMIC DNA]</scope>
    <source>
        <strain>ATCC 25285 / DSM 2151 / CCUG 4856 / JCM 11019 / LMG 10263 / NCTC 9343 / Onslow / VPI 2553 / EN-2</strain>
    </source>
</reference>
<evidence type="ECO:0000255" key="1">
    <source>
        <dbReference type="HAMAP-Rule" id="MF_00374"/>
    </source>
</evidence>
<evidence type="ECO:0000305" key="2"/>
<feature type="chain" id="PRO_0000130350" description="Large ribosomal subunit protein uL29">
    <location>
        <begin position="1"/>
        <end position="65"/>
    </location>
</feature>
<gene>
    <name evidence="1" type="primary">rpmC</name>
    <name type="ordered locus">BF3995</name>
</gene>
<accession>Q5L8B7</accession>
<protein>
    <recommendedName>
        <fullName evidence="1">Large ribosomal subunit protein uL29</fullName>
    </recommendedName>
    <alternativeName>
        <fullName evidence="2">50S ribosomal protein L29</fullName>
    </alternativeName>
</protein>
<comment type="similarity">
    <text evidence="1">Belongs to the universal ribosomal protein uL29 family.</text>
</comment>
<name>RL29_BACFN</name>
<sequence>MKIAEIKEMSTNDLVERVEAEVVNYNQMVINHSISPLENPAQIKQLRRTIARMRTELRQRELNNK</sequence>
<keyword id="KW-0687">Ribonucleoprotein</keyword>
<keyword id="KW-0689">Ribosomal protein</keyword>
<dbReference type="EMBL" id="CR626927">
    <property type="protein sequence ID" value="CAH09671.1"/>
    <property type="molecule type" value="Genomic_DNA"/>
</dbReference>
<dbReference type="RefSeq" id="WP_005782204.1">
    <property type="nucleotide sequence ID" value="NZ_UFTH01000001.1"/>
</dbReference>
<dbReference type="SMR" id="Q5L8B7"/>
<dbReference type="PaxDb" id="272559-BF9343_3890"/>
<dbReference type="GeneID" id="93105316"/>
<dbReference type="KEGG" id="bfs:BF9343_3890"/>
<dbReference type="eggNOG" id="COG0255">
    <property type="taxonomic scope" value="Bacteria"/>
</dbReference>
<dbReference type="HOGENOM" id="CLU_158491_5_1_10"/>
<dbReference type="Proteomes" id="UP000006731">
    <property type="component" value="Chromosome"/>
</dbReference>
<dbReference type="GO" id="GO:1990904">
    <property type="term" value="C:ribonucleoprotein complex"/>
    <property type="evidence" value="ECO:0007669"/>
    <property type="project" value="UniProtKB-KW"/>
</dbReference>
<dbReference type="GO" id="GO:0005840">
    <property type="term" value="C:ribosome"/>
    <property type="evidence" value="ECO:0007669"/>
    <property type="project" value="UniProtKB-KW"/>
</dbReference>
<dbReference type="GO" id="GO:0003735">
    <property type="term" value="F:structural constituent of ribosome"/>
    <property type="evidence" value="ECO:0007669"/>
    <property type="project" value="InterPro"/>
</dbReference>
<dbReference type="GO" id="GO:0006412">
    <property type="term" value="P:translation"/>
    <property type="evidence" value="ECO:0007669"/>
    <property type="project" value="UniProtKB-UniRule"/>
</dbReference>
<dbReference type="CDD" id="cd00427">
    <property type="entry name" value="Ribosomal_L29_HIP"/>
    <property type="match status" value="1"/>
</dbReference>
<dbReference type="FunFam" id="1.10.287.310:FF:000003">
    <property type="entry name" value="50S ribosomal protein L29"/>
    <property type="match status" value="1"/>
</dbReference>
<dbReference type="Gene3D" id="1.10.287.310">
    <property type="match status" value="1"/>
</dbReference>
<dbReference type="HAMAP" id="MF_00374">
    <property type="entry name" value="Ribosomal_uL29"/>
    <property type="match status" value="1"/>
</dbReference>
<dbReference type="InterPro" id="IPR001854">
    <property type="entry name" value="Ribosomal_uL29"/>
</dbReference>
<dbReference type="InterPro" id="IPR018254">
    <property type="entry name" value="Ribosomal_uL29_CS"/>
</dbReference>
<dbReference type="InterPro" id="IPR036049">
    <property type="entry name" value="Ribosomal_uL29_sf"/>
</dbReference>
<dbReference type="NCBIfam" id="TIGR00012">
    <property type="entry name" value="L29"/>
    <property type="match status" value="1"/>
</dbReference>
<dbReference type="Pfam" id="PF00831">
    <property type="entry name" value="Ribosomal_L29"/>
    <property type="match status" value="1"/>
</dbReference>
<dbReference type="SUPFAM" id="SSF46561">
    <property type="entry name" value="Ribosomal protein L29 (L29p)"/>
    <property type="match status" value="1"/>
</dbReference>
<dbReference type="PROSITE" id="PS00579">
    <property type="entry name" value="RIBOSOMAL_L29"/>
    <property type="match status" value="1"/>
</dbReference>
<organism>
    <name type="scientific">Bacteroides fragilis (strain ATCC 25285 / DSM 2151 / CCUG 4856 / JCM 11019 / LMG 10263 / NCTC 9343 / Onslow / VPI 2553 / EN-2)</name>
    <dbReference type="NCBI Taxonomy" id="272559"/>
    <lineage>
        <taxon>Bacteria</taxon>
        <taxon>Pseudomonadati</taxon>
        <taxon>Bacteroidota</taxon>
        <taxon>Bacteroidia</taxon>
        <taxon>Bacteroidales</taxon>
        <taxon>Bacteroidaceae</taxon>
        <taxon>Bacteroides</taxon>
    </lineage>
</organism>
<proteinExistence type="inferred from homology"/>